<keyword id="KW-0963">Cytoplasm</keyword>
<keyword id="KW-0210">Decarboxylase</keyword>
<keyword id="KW-0456">Lyase</keyword>
<keyword id="KW-0627">Porphyrin biosynthesis</keyword>
<evidence type="ECO:0000255" key="1">
    <source>
        <dbReference type="HAMAP-Rule" id="MF_00218"/>
    </source>
</evidence>
<accession>B0KN28</accession>
<gene>
    <name evidence="1" type="primary">hemE</name>
    <name type="ordered locus">PputGB1_5124</name>
</gene>
<feature type="chain" id="PRO_1000078081" description="Uroporphyrinogen decarboxylase">
    <location>
        <begin position="1"/>
        <end position="354"/>
    </location>
</feature>
<feature type="binding site" evidence="1">
    <location>
        <begin position="27"/>
        <end position="31"/>
    </location>
    <ligand>
        <name>substrate</name>
    </ligand>
</feature>
<feature type="binding site" evidence="1">
    <location>
        <position position="77"/>
    </location>
    <ligand>
        <name>substrate</name>
    </ligand>
</feature>
<feature type="binding site" evidence="1">
    <location>
        <position position="154"/>
    </location>
    <ligand>
        <name>substrate</name>
    </ligand>
</feature>
<feature type="binding site" evidence="1">
    <location>
        <position position="209"/>
    </location>
    <ligand>
        <name>substrate</name>
    </ligand>
</feature>
<feature type="binding site" evidence="1">
    <location>
        <position position="327"/>
    </location>
    <ligand>
        <name>substrate</name>
    </ligand>
</feature>
<feature type="site" description="Transition state stabilizer" evidence="1">
    <location>
        <position position="77"/>
    </location>
</feature>
<protein>
    <recommendedName>
        <fullName evidence="1">Uroporphyrinogen decarboxylase</fullName>
        <shortName evidence="1">UPD</shortName>
        <shortName evidence="1">URO-D</shortName>
        <ecNumber evidence="1">4.1.1.37</ecNumber>
    </recommendedName>
</protein>
<dbReference type="EC" id="4.1.1.37" evidence="1"/>
<dbReference type="EMBL" id="CP000926">
    <property type="protein sequence ID" value="ABZ01009.1"/>
    <property type="molecule type" value="Genomic_DNA"/>
</dbReference>
<dbReference type="RefSeq" id="WP_012274627.1">
    <property type="nucleotide sequence ID" value="NC_010322.1"/>
</dbReference>
<dbReference type="SMR" id="B0KN28"/>
<dbReference type="KEGG" id="ppg:PputGB1_5124"/>
<dbReference type="eggNOG" id="COG0407">
    <property type="taxonomic scope" value="Bacteria"/>
</dbReference>
<dbReference type="HOGENOM" id="CLU_040933_0_0_6"/>
<dbReference type="UniPathway" id="UPA00251">
    <property type="reaction ID" value="UER00321"/>
</dbReference>
<dbReference type="Proteomes" id="UP000002157">
    <property type="component" value="Chromosome"/>
</dbReference>
<dbReference type="GO" id="GO:0005829">
    <property type="term" value="C:cytosol"/>
    <property type="evidence" value="ECO:0007669"/>
    <property type="project" value="TreeGrafter"/>
</dbReference>
<dbReference type="GO" id="GO:0004853">
    <property type="term" value="F:uroporphyrinogen decarboxylase activity"/>
    <property type="evidence" value="ECO:0007669"/>
    <property type="project" value="UniProtKB-UniRule"/>
</dbReference>
<dbReference type="GO" id="GO:0019353">
    <property type="term" value="P:protoporphyrinogen IX biosynthetic process from glutamate"/>
    <property type="evidence" value="ECO:0007669"/>
    <property type="project" value="TreeGrafter"/>
</dbReference>
<dbReference type="CDD" id="cd00717">
    <property type="entry name" value="URO-D"/>
    <property type="match status" value="1"/>
</dbReference>
<dbReference type="FunFam" id="3.20.20.210:FF:000001">
    <property type="entry name" value="Uroporphyrinogen decarboxylase"/>
    <property type="match status" value="1"/>
</dbReference>
<dbReference type="Gene3D" id="3.20.20.210">
    <property type="match status" value="1"/>
</dbReference>
<dbReference type="HAMAP" id="MF_00218">
    <property type="entry name" value="URO_D"/>
    <property type="match status" value="1"/>
</dbReference>
<dbReference type="InterPro" id="IPR038071">
    <property type="entry name" value="UROD/MetE-like_sf"/>
</dbReference>
<dbReference type="InterPro" id="IPR006361">
    <property type="entry name" value="Uroporphyrinogen_deCO2ase_HemE"/>
</dbReference>
<dbReference type="InterPro" id="IPR000257">
    <property type="entry name" value="Uroporphyrinogen_deCOase"/>
</dbReference>
<dbReference type="NCBIfam" id="TIGR01464">
    <property type="entry name" value="hemE"/>
    <property type="match status" value="1"/>
</dbReference>
<dbReference type="PANTHER" id="PTHR21091">
    <property type="entry name" value="METHYLTETRAHYDROFOLATE:HOMOCYSTEINE METHYLTRANSFERASE RELATED"/>
    <property type="match status" value="1"/>
</dbReference>
<dbReference type="PANTHER" id="PTHR21091:SF169">
    <property type="entry name" value="UROPORPHYRINOGEN DECARBOXYLASE"/>
    <property type="match status" value="1"/>
</dbReference>
<dbReference type="Pfam" id="PF01208">
    <property type="entry name" value="URO-D"/>
    <property type="match status" value="1"/>
</dbReference>
<dbReference type="SUPFAM" id="SSF51726">
    <property type="entry name" value="UROD/MetE-like"/>
    <property type="match status" value="1"/>
</dbReference>
<dbReference type="PROSITE" id="PS00906">
    <property type="entry name" value="UROD_1"/>
    <property type="match status" value="1"/>
</dbReference>
<dbReference type="PROSITE" id="PS00907">
    <property type="entry name" value="UROD_2"/>
    <property type="match status" value="1"/>
</dbReference>
<organism>
    <name type="scientific">Pseudomonas putida (strain GB-1)</name>
    <dbReference type="NCBI Taxonomy" id="76869"/>
    <lineage>
        <taxon>Bacteria</taxon>
        <taxon>Pseudomonadati</taxon>
        <taxon>Pseudomonadota</taxon>
        <taxon>Gammaproteobacteria</taxon>
        <taxon>Pseudomonadales</taxon>
        <taxon>Pseudomonadaceae</taxon>
        <taxon>Pseudomonas</taxon>
    </lineage>
</organism>
<proteinExistence type="inferred from homology"/>
<reference key="1">
    <citation type="submission" date="2008-01" db="EMBL/GenBank/DDBJ databases">
        <title>Complete sequence of Pseudomonas putida GB-1.</title>
        <authorList>
            <consortium name="US DOE Joint Genome Institute"/>
            <person name="Copeland A."/>
            <person name="Lucas S."/>
            <person name="Lapidus A."/>
            <person name="Barry K."/>
            <person name="Glavina del Rio T."/>
            <person name="Dalin E."/>
            <person name="Tice H."/>
            <person name="Pitluck S."/>
            <person name="Bruce D."/>
            <person name="Goodwin L."/>
            <person name="Chertkov O."/>
            <person name="Brettin T."/>
            <person name="Detter J.C."/>
            <person name="Han C."/>
            <person name="Kuske C.R."/>
            <person name="Schmutz J."/>
            <person name="Larimer F."/>
            <person name="Land M."/>
            <person name="Hauser L."/>
            <person name="Kyrpides N."/>
            <person name="Kim E."/>
            <person name="McCarthy J.K."/>
            <person name="Richardson P."/>
        </authorList>
    </citation>
    <scope>NUCLEOTIDE SEQUENCE [LARGE SCALE GENOMIC DNA]</scope>
    <source>
        <strain>GB-1</strain>
    </source>
</reference>
<sequence length="354" mass="38945">MTALKNDRFLRALLKQPVDVTPVWMMRQAGRYLPEYRASRAKAGDFMSLCMNPQFACEVTLQPLDRYPLDAAILFSDILTIPDAMGLGLYFETGEGPRFKKVISTPADIEALPIPDPQKDLGYVMDAVSTIRRELNGRVPLIGFSGSPWTLATYMVEGGSSKDFRKTKAMAYDNPQALHLLLDKLAQSVTSYLNGQILAGAQAVQIFDTWGGNLSAAAYQEFSLAYMRKIVSGLIREHEGRKVPVILFTKNGGLWLESIAEAGADALGLDWTCEIGDARRRVGDRVALQGNMDPTVLYAKPEAIRQEVARILASYGQGTGHVFNLGHGITPEVDPEHAGVFINAVHELSAQYHQ</sequence>
<comment type="function">
    <text evidence="1">Catalyzes the decarboxylation of four acetate groups of uroporphyrinogen-III to yield coproporphyrinogen-III.</text>
</comment>
<comment type="catalytic activity">
    <reaction evidence="1">
        <text>uroporphyrinogen III + 4 H(+) = coproporphyrinogen III + 4 CO2</text>
        <dbReference type="Rhea" id="RHEA:19865"/>
        <dbReference type="ChEBI" id="CHEBI:15378"/>
        <dbReference type="ChEBI" id="CHEBI:16526"/>
        <dbReference type="ChEBI" id="CHEBI:57308"/>
        <dbReference type="ChEBI" id="CHEBI:57309"/>
        <dbReference type="EC" id="4.1.1.37"/>
    </reaction>
</comment>
<comment type="pathway">
    <text evidence="1">Porphyrin-containing compound metabolism; protoporphyrin-IX biosynthesis; coproporphyrinogen-III from 5-aminolevulinate: step 4/4.</text>
</comment>
<comment type="subunit">
    <text evidence="1">Homodimer.</text>
</comment>
<comment type="subcellular location">
    <subcellularLocation>
        <location evidence="1">Cytoplasm</location>
    </subcellularLocation>
</comment>
<comment type="similarity">
    <text evidence="1">Belongs to the uroporphyrinogen decarboxylase family.</text>
</comment>
<name>DCUP_PSEPG</name>